<evidence type="ECO:0000255" key="1">
    <source>
        <dbReference type="HAMAP-Rule" id="MF_01357"/>
    </source>
</evidence>
<keyword id="KW-0997">Cell inner membrane</keyword>
<keyword id="KW-1003">Cell membrane</keyword>
<keyword id="KW-0472">Membrane</keyword>
<keyword id="KW-0520">NAD</keyword>
<keyword id="KW-0874">Quinone</keyword>
<keyword id="KW-1278">Translocase</keyword>
<keyword id="KW-0813">Transport</keyword>
<keyword id="KW-0830">Ubiquinone</keyword>
<accession>A9N8X1</accession>
<sequence>MAEKQTLIDAINDRFNSQIEAVVAGVDMVTIELLPTHLLEVCTTLRDDPPFNFELLLDVCGVDYLEYGMSPWRTEETPNTGFSRGFEEVIQEQIIPWNKPRFAVVYHLLSLRHNHRIRLKTYVEGDPPLVPSVIKIWSSADWYEREAFDLYGIVFEGHPDLRRLLTDYGFVGHPFRKDFPLIGEVELRYDAAQQRCVYEPVSIQPRVLVPKVIRVDSRYEKGEKENG</sequence>
<feature type="chain" id="PRO_0000358086" description="NADH-quinone oxidoreductase subunit C">
    <location>
        <begin position="1"/>
        <end position="227"/>
    </location>
</feature>
<dbReference type="EC" id="7.1.1.-" evidence="1"/>
<dbReference type="EMBL" id="CP000890">
    <property type="protein sequence ID" value="ABX77465.1"/>
    <property type="molecule type" value="Genomic_DNA"/>
</dbReference>
<dbReference type="RefSeq" id="WP_012220664.1">
    <property type="nucleotide sequence ID" value="NC_010117.1"/>
</dbReference>
<dbReference type="SMR" id="A9N8X1"/>
<dbReference type="KEGG" id="cbs:COXBURSA331_A1616"/>
<dbReference type="HOGENOM" id="CLU_042628_2_1_6"/>
<dbReference type="GO" id="GO:0005886">
    <property type="term" value="C:plasma membrane"/>
    <property type="evidence" value="ECO:0007669"/>
    <property type="project" value="UniProtKB-SubCell"/>
</dbReference>
<dbReference type="GO" id="GO:0008137">
    <property type="term" value="F:NADH dehydrogenase (ubiquinone) activity"/>
    <property type="evidence" value="ECO:0007669"/>
    <property type="project" value="InterPro"/>
</dbReference>
<dbReference type="GO" id="GO:0050136">
    <property type="term" value="F:NADH:ubiquinone reductase (non-electrogenic) activity"/>
    <property type="evidence" value="ECO:0007669"/>
    <property type="project" value="UniProtKB-UniRule"/>
</dbReference>
<dbReference type="GO" id="GO:0048038">
    <property type="term" value="F:quinone binding"/>
    <property type="evidence" value="ECO:0007669"/>
    <property type="project" value="UniProtKB-KW"/>
</dbReference>
<dbReference type="FunFam" id="3.30.460.80:FF:000006">
    <property type="entry name" value="NADH-quinone oxidoreductase subunit C"/>
    <property type="match status" value="1"/>
</dbReference>
<dbReference type="Gene3D" id="3.30.460.80">
    <property type="entry name" value="NADH:ubiquinone oxidoreductase, 30kDa subunit"/>
    <property type="match status" value="1"/>
</dbReference>
<dbReference type="HAMAP" id="MF_01357">
    <property type="entry name" value="NDH1_NuoC"/>
    <property type="match status" value="1"/>
</dbReference>
<dbReference type="InterPro" id="IPR010218">
    <property type="entry name" value="NADH_DH_suC"/>
</dbReference>
<dbReference type="InterPro" id="IPR037232">
    <property type="entry name" value="NADH_quin_OxRdtase_su_C/D-like"/>
</dbReference>
<dbReference type="InterPro" id="IPR001268">
    <property type="entry name" value="NADH_UbQ_OxRdtase_30kDa_su"/>
</dbReference>
<dbReference type="InterPro" id="IPR020396">
    <property type="entry name" value="NADH_UbQ_OxRdtase_CS"/>
</dbReference>
<dbReference type="NCBIfam" id="TIGR01961">
    <property type="entry name" value="NuoC_fam"/>
    <property type="match status" value="1"/>
</dbReference>
<dbReference type="NCBIfam" id="NF004730">
    <property type="entry name" value="PRK06074.1-1"/>
    <property type="match status" value="1"/>
</dbReference>
<dbReference type="PANTHER" id="PTHR10884:SF14">
    <property type="entry name" value="NADH DEHYDROGENASE [UBIQUINONE] IRON-SULFUR PROTEIN 3, MITOCHONDRIAL"/>
    <property type="match status" value="1"/>
</dbReference>
<dbReference type="PANTHER" id="PTHR10884">
    <property type="entry name" value="NADH DEHYDROGENASE UBIQUINONE IRON-SULFUR PROTEIN 3"/>
    <property type="match status" value="1"/>
</dbReference>
<dbReference type="Pfam" id="PF00329">
    <property type="entry name" value="Complex1_30kDa"/>
    <property type="match status" value="1"/>
</dbReference>
<dbReference type="SUPFAM" id="SSF143243">
    <property type="entry name" value="Nqo5-like"/>
    <property type="match status" value="1"/>
</dbReference>
<dbReference type="PROSITE" id="PS00542">
    <property type="entry name" value="COMPLEX1_30K"/>
    <property type="match status" value="1"/>
</dbReference>
<protein>
    <recommendedName>
        <fullName evidence="1">NADH-quinone oxidoreductase subunit C</fullName>
        <ecNumber evidence="1">7.1.1.-</ecNumber>
    </recommendedName>
    <alternativeName>
        <fullName evidence="1">NADH dehydrogenase I subunit C</fullName>
    </alternativeName>
    <alternativeName>
        <fullName evidence="1">NDH-1 subunit C</fullName>
    </alternativeName>
</protein>
<organism>
    <name type="scientific">Coxiella burnetii (strain RSA 331 / Henzerling II)</name>
    <dbReference type="NCBI Taxonomy" id="360115"/>
    <lineage>
        <taxon>Bacteria</taxon>
        <taxon>Pseudomonadati</taxon>
        <taxon>Pseudomonadota</taxon>
        <taxon>Gammaproteobacteria</taxon>
        <taxon>Legionellales</taxon>
        <taxon>Coxiellaceae</taxon>
        <taxon>Coxiella</taxon>
    </lineage>
</organism>
<proteinExistence type="inferred from homology"/>
<reference key="1">
    <citation type="submission" date="2007-11" db="EMBL/GenBank/DDBJ databases">
        <title>Genome sequencing of phylogenetically and phenotypically diverse Coxiella burnetii isolates.</title>
        <authorList>
            <person name="Seshadri R."/>
            <person name="Samuel J.E."/>
        </authorList>
    </citation>
    <scope>NUCLEOTIDE SEQUENCE [LARGE SCALE GENOMIC DNA]</scope>
    <source>
        <strain>RSA 331 / Henzerling II</strain>
    </source>
</reference>
<comment type="function">
    <text evidence="1">NDH-1 shuttles electrons from NADH, via FMN and iron-sulfur (Fe-S) centers, to quinones in the respiratory chain. The immediate electron acceptor for the enzyme in this species is believed to be ubiquinone. Couples the redox reaction to proton translocation (for every two electrons transferred, four hydrogen ions are translocated across the cytoplasmic membrane), and thus conserves the redox energy in a proton gradient.</text>
</comment>
<comment type="catalytic activity">
    <reaction evidence="1">
        <text>a quinone + NADH + 5 H(+)(in) = a quinol + NAD(+) + 4 H(+)(out)</text>
        <dbReference type="Rhea" id="RHEA:57888"/>
        <dbReference type="ChEBI" id="CHEBI:15378"/>
        <dbReference type="ChEBI" id="CHEBI:24646"/>
        <dbReference type="ChEBI" id="CHEBI:57540"/>
        <dbReference type="ChEBI" id="CHEBI:57945"/>
        <dbReference type="ChEBI" id="CHEBI:132124"/>
    </reaction>
</comment>
<comment type="subunit">
    <text evidence="1">NDH-1 is composed of 14 different subunits. Subunits NuoB, C, D, E, F, and G constitute the peripheral sector of the complex.</text>
</comment>
<comment type="subcellular location">
    <subcellularLocation>
        <location evidence="1">Cell inner membrane</location>
        <topology evidence="1">Peripheral membrane protein</topology>
        <orientation evidence="1">Cytoplasmic side</orientation>
    </subcellularLocation>
</comment>
<comment type="similarity">
    <text evidence="1">Belongs to the complex I 30 kDa subunit family.</text>
</comment>
<gene>
    <name evidence="1" type="primary">nuoC</name>
    <name type="ordered locus">COXBURSA331_A1616</name>
</gene>
<name>NUOC_COXBR</name>